<dbReference type="EC" id="1.1.1.384" evidence="2"/>
<dbReference type="EMBL" id="AJ011500">
    <property type="protein sequence ID" value="CAA09647.1"/>
    <property type="molecule type" value="Genomic_DNA"/>
</dbReference>
<dbReference type="PIR" id="T46531">
    <property type="entry name" value="T46531"/>
</dbReference>
<dbReference type="SMR" id="Q9ZA33"/>
<dbReference type="UniPathway" id="UPA00175"/>
<dbReference type="GO" id="GO:0000166">
    <property type="term" value="F:nucleotide binding"/>
    <property type="evidence" value="ECO:0007669"/>
    <property type="project" value="InterPro"/>
</dbReference>
<dbReference type="GO" id="GO:0016491">
    <property type="term" value="F:oxidoreductase activity"/>
    <property type="evidence" value="ECO:0007669"/>
    <property type="project" value="UniProtKB-KW"/>
</dbReference>
<dbReference type="GO" id="GO:0017000">
    <property type="term" value="P:antibiotic biosynthetic process"/>
    <property type="evidence" value="ECO:0007669"/>
    <property type="project" value="UniProtKB-KW"/>
</dbReference>
<dbReference type="Gene3D" id="3.30.360.10">
    <property type="entry name" value="Dihydrodipicolinate Reductase, domain 2"/>
    <property type="match status" value="1"/>
</dbReference>
<dbReference type="Gene3D" id="3.40.50.720">
    <property type="entry name" value="NAD(P)-binding Rossmann-like Domain"/>
    <property type="match status" value="1"/>
</dbReference>
<dbReference type="InterPro" id="IPR000683">
    <property type="entry name" value="Gfo/Idh/MocA-like_OxRdtase_N"/>
</dbReference>
<dbReference type="InterPro" id="IPR050984">
    <property type="entry name" value="Gfo/Idh/MocA_domain"/>
</dbReference>
<dbReference type="InterPro" id="IPR055170">
    <property type="entry name" value="GFO_IDH_MocA-like_dom"/>
</dbReference>
<dbReference type="InterPro" id="IPR036291">
    <property type="entry name" value="NAD(P)-bd_dom_sf"/>
</dbReference>
<dbReference type="PANTHER" id="PTHR22604">
    <property type="entry name" value="OXIDOREDUCTASES"/>
    <property type="match status" value="1"/>
</dbReference>
<dbReference type="PANTHER" id="PTHR22604:SF105">
    <property type="entry name" value="TRANS-1,2-DIHYDROBENZENE-1,2-DIOL DEHYDROGENASE"/>
    <property type="match status" value="1"/>
</dbReference>
<dbReference type="Pfam" id="PF01408">
    <property type="entry name" value="GFO_IDH_MocA"/>
    <property type="match status" value="1"/>
</dbReference>
<dbReference type="Pfam" id="PF22725">
    <property type="entry name" value="GFO_IDH_MocA_C3"/>
    <property type="match status" value="1"/>
</dbReference>
<dbReference type="SUPFAM" id="SSF55347">
    <property type="entry name" value="Glyceraldehyde-3-phosphate dehydrogenase-like, C-terminal domain"/>
    <property type="match status" value="1"/>
</dbReference>
<dbReference type="SUPFAM" id="SSF51735">
    <property type="entry name" value="NAD(P)-binding Rossmann-fold domains"/>
    <property type="match status" value="1"/>
</dbReference>
<keyword id="KW-0045">Antibiotic biosynthesis</keyword>
<keyword id="KW-0521">NADP</keyword>
<keyword id="KW-0560">Oxidoreductase</keyword>
<comment type="function">
    <text evidence="2">Involved in the biosynthesis of the 2,6-deoxysugar, dTDP-L-rhodinose, attached to the benzoisochromane quinone chromophore to produce the aglycone antibiotics granaticin and granaticin B. Catalyzes the reduction of the C-3 keto moiety of dTDP-3,4-diketo-2,6-dideoxy-alpha-D-glucose to yield dTDP-4-keto-2,6-dideoxy-alpha-D-glucose. NADPH is the better reductant, however NADH can also be used.</text>
</comment>
<comment type="catalytic activity">
    <reaction evidence="2">
        <text>dTDP-4-dehydro-2,6-dideoxy-alpha-D-glucose + NADP(+) = dTDP-3,4-didehydro-2,6-dideoxy-alpha-D-glucose + NADPH + H(+)</text>
        <dbReference type="Rhea" id="RHEA:44624"/>
        <dbReference type="ChEBI" id="CHEBI:15378"/>
        <dbReference type="ChEBI" id="CHEBI:57783"/>
        <dbReference type="ChEBI" id="CHEBI:58349"/>
        <dbReference type="ChEBI" id="CHEBI:84537"/>
        <dbReference type="ChEBI" id="CHEBI:84540"/>
        <dbReference type="EC" id="1.1.1.384"/>
    </reaction>
</comment>
<comment type="pathway">
    <text evidence="5 6">Antibiotic biosynthesis; granaticin biosynthesis.</text>
</comment>
<comment type="similarity">
    <text evidence="4">Belongs to the Gfo/Idh/MocA family.</text>
</comment>
<feature type="chain" id="PRO_5004337355" description="dTDP-3,4-didehydro-2,6-dideoxy-alpha-D-glucose 3-reductase">
    <location>
        <begin position="1"/>
        <end position="342"/>
    </location>
</feature>
<feature type="active site" description="Proton donor" evidence="1">
    <location>
        <position position="104"/>
    </location>
</feature>
<feature type="binding site" evidence="1">
    <location>
        <begin position="19"/>
        <end position="25"/>
    </location>
    <ligand>
        <name>NADP(+)</name>
        <dbReference type="ChEBI" id="CHEBI:58349"/>
    </ligand>
</feature>
<feature type="binding site" evidence="1">
    <location>
        <position position="26"/>
    </location>
    <ligand>
        <name>substrate</name>
    </ligand>
</feature>
<feature type="binding site" evidence="1">
    <location>
        <begin position="44"/>
        <end position="45"/>
    </location>
    <ligand>
        <name>NADP(+)</name>
        <dbReference type="ChEBI" id="CHEBI:58349"/>
    </ligand>
</feature>
<feature type="binding site" evidence="1">
    <location>
        <position position="65"/>
    </location>
    <ligand>
        <name>NADP(+)</name>
        <dbReference type="ChEBI" id="CHEBI:58349"/>
    </ligand>
</feature>
<feature type="binding site" evidence="1">
    <location>
        <position position="81"/>
    </location>
    <ligand>
        <name>NADP(+)</name>
        <dbReference type="ChEBI" id="CHEBI:58349"/>
    </ligand>
</feature>
<feature type="binding site" evidence="1">
    <location>
        <position position="86"/>
    </location>
    <ligand>
        <name>NADP(+)</name>
        <dbReference type="ChEBI" id="CHEBI:58349"/>
    </ligand>
</feature>
<feature type="binding site" evidence="1">
    <location>
        <position position="172"/>
    </location>
    <ligand>
        <name>NADP(+)</name>
        <dbReference type="ChEBI" id="CHEBI:58349"/>
    </ligand>
</feature>
<feature type="binding site" evidence="1">
    <location>
        <position position="184"/>
    </location>
    <ligand>
        <name>NADP(+)</name>
        <dbReference type="ChEBI" id="CHEBI:58349"/>
    </ligand>
</feature>
<feature type="binding site" evidence="1">
    <location>
        <position position="243"/>
    </location>
    <ligand>
        <name>substrate</name>
    </ligand>
</feature>
<feature type="binding site" evidence="1">
    <location>
        <position position="263"/>
    </location>
    <ligand>
        <name>substrate</name>
    </ligand>
</feature>
<evidence type="ECO:0000250" key="1">
    <source>
        <dbReference type="UniProtKB" id="B3TMR8"/>
    </source>
</evidence>
<evidence type="ECO:0000269" key="2">
    <source ref="4"/>
</evidence>
<evidence type="ECO:0000303" key="3">
    <source ref="4"/>
</evidence>
<evidence type="ECO:0000305" key="4"/>
<evidence type="ECO:0000305" key="5">
    <source>
    </source>
</evidence>
<evidence type="ECO:0000305" key="6">
    <source ref="4"/>
</evidence>
<evidence type="ECO:0000312" key="7">
    <source>
        <dbReference type="EMBL" id="CAA09647.1"/>
    </source>
</evidence>
<gene>
    <name evidence="7" type="primary">gra-orf26</name>
</gene>
<accession>Q9ZA33</accession>
<reference key="1">
    <citation type="journal article" date="1989" name="EMBO J.">
        <title>Structure and deduced function of the granaticin-producing polyketide synthase gene cluster of Streptomyces violaceoruber Tu22.</title>
        <authorList>
            <person name="Sherman D.H."/>
            <person name="Malpartida F."/>
            <person name="Bibb M.J."/>
            <person name="Kieser H.M."/>
            <person name="Bibb M.J."/>
            <person name="Hopwood D.A."/>
        </authorList>
    </citation>
    <scope>NUCLEOTIDE SEQUENCE [GENOMIC DNA]</scope>
    <source>
        <strain evidence="7">Tu22</strain>
    </source>
</reference>
<reference key="2">
    <citation type="journal article" date="1995" name="Mol. Gen. Genet.">
        <title>Identification of Streptomyces violaceoruber Tu22 genes involved in the biosynthesis of granaticin.</title>
        <authorList>
            <person name="Bechthold A."/>
            <person name="Sohng J.K."/>
            <person name="Smith T.M."/>
            <person name="Chu X."/>
            <person name="Floss H.G."/>
        </authorList>
    </citation>
    <scope>NUCLEOTIDE SEQUENCE [GENOMIC DNA]</scope>
    <source>
        <strain evidence="7">Tu22</strain>
    </source>
</reference>
<reference key="3">
    <citation type="journal article" date="1998" name="Chem. Biol.">
        <title>The granaticin biosynthetic gene cluster of Streptomyces violaceoruber Tu22: sequence analysis and expression in a heterologous host.</title>
        <authorList>
            <person name="Ichinose K."/>
            <person name="Bedford D.J."/>
            <person name="Tornus D."/>
            <person name="Bechthold A."/>
            <person name="Bibb M.J."/>
            <person name="Revill W.P."/>
            <person name="Floss H.G."/>
            <person name="Hopwood D.A."/>
        </authorList>
    </citation>
    <scope>NUCLEOTIDE SEQUENCE [GENOMIC DNA]</scope>
    <scope>PATHWAY</scope>
    <source>
        <strain evidence="7">Tu22</strain>
    </source>
</reference>
<reference key="4">
    <citation type="journal article" date="1999" name="J. Am. Chem. Soc.">
        <title>Mechanism of the 2-deoxygenation step in the biosynthesis of the deoxyhexose moieties of the antibiotics granaticin and oleandomycin.</title>
        <authorList>
            <person name="Draeger G."/>
            <person name="Park S.-H.H."/>
            <person name="Floss H.G."/>
        </authorList>
    </citation>
    <scope>FUNCTION</scope>
    <scope>CATALYTIC ACTIVITY</scope>
    <scope>PATHWAY</scope>
    <scope>SUBSTRATE SPECIFICITY</scope>
    <source>
        <strain>Tu22</strain>
    </source>
</reference>
<organism>
    <name type="scientific">Streptomyces violaceoruber</name>
    <dbReference type="NCBI Taxonomy" id="1935"/>
    <lineage>
        <taxon>Bacteria</taxon>
        <taxon>Bacillati</taxon>
        <taxon>Actinomycetota</taxon>
        <taxon>Actinomycetes</taxon>
        <taxon>Kitasatosporales</taxon>
        <taxon>Streptomycetaceae</taxon>
        <taxon>Streptomyces</taxon>
        <taxon>Streptomyces violaceoruber group</taxon>
    </lineage>
</organism>
<name>GRA26_STRVN</name>
<proteinExistence type="evidence at protein level"/>
<protein>
    <recommendedName>
        <fullName evidence="3">dTDP-3,4-didehydro-2,6-dideoxy-alpha-D-glucose 3-reductase</fullName>
        <ecNumber evidence="2">1.1.1.384</ecNumber>
    </recommendedName>
    <alternativeName>
        <fullName evidence="3">Gra-orf26 protein</fullName>
    </alternativeName>
    <alternativeName>
        <fullName evidence="4">dTDP-3,4-diketo-2,6-dideoxyglucose 3-ketoreductase</fullName>
    </alternativeName>
</protein>
<sequence length="342" mass="36109">MNAGHTETVRALRIGVAGCADIALRRMLPAFAASPHTEPTAVASRSSEKARAAAETFGCAAVEGYDALLERRDVDAVYIPLPVALHAPWTERALRAGKHVLAEKPLTARAADTARLLDLARERGLVLAENYLFVHHSAYTAVRDLVDAGAIGDVRALSASFTIPPRSADDIRYRADLDGGALLDIGVYPLRLASLLLGSELRVRGAVLRHDTVRGVDLGGSALLGDPGTGVSAQLVFGMEHAYTAGWRLLGSEGSLTLDRAYSPPAGHRPVLRIERPDGTEERILPAHDQATAAVAAFAEAVRRAGQGAGQDKGRSSGDAAAVLRQAELVDAVRQAAHLVKI</sequence>